<name>COX1_SEPOF</name>
<feature type="chain" id="PRO_0000183416" description="Cytochrome c oxidase subunit 1">
    <location>
        <begin position="1" status="less than"/>
        <end position="223" status="greater than"/>
    </location>
</feature>
<feature type="topological domain" description="Mitochondrial matrix" evidence="2">
    <location>
        <begin position="1" status="less than"/>
        <end position="4"/>
    </location>
</feature>
<feature type="transmembrane region" description="Helical; Name=1" evidence="2">
    <location>
        <begin position="5"/>
        <end position="27"/>
    </location>
</feature>
<feature type="topological domain" description="Mitochondrial intermembrane" evidence="2">
    <location>
        <begin position="28"/>
        <end position="46"/>
    </location>
</feature>
<feature type="transmembrane region" description="Helical; Name=2" evidence="2">
    <location>
        <begin position="47"/>
        <end position="69"/>
    </location>
</feature>
<feature type="topological domain" description="Mitochondrial matrix" evidence="2">
    <location>
        <begin position="70"/>
        <end position="88"/>
    </location>
</feature>
<feature type="transmembrane region" description="Helical; Name=3" evidence="2">
    <location>
        <begin position="89"/>
        <end position="111"/>
    </location>
</feature>
<feature type="topological domain" description="Mitochondrial intermembrane" evidence="2">
    <location>
        <begin position="112"/>
        <end position="130"/>
    </location>
</feature>
<feature type="transmembrane region" description="Helical; Name=4" evidence="2">
    <location>
        <begin position="131"/>
        <end position="153"/>
    </location>
</feature>
<feature type="topological domain" description="Mitochondrial matrix" evidence="2">
    <location>
        <begin position="154"/>
        <end position="173"/>
    </location>
</feature>
<feature type="transmembrane region" description="Helical; Name=5" evidence="2">
    <location>
        <begin position="174"/>
        <end position="196"/>
    </location>
</feature>
<feature type="topological domain" description="Mitochondrial intermembrane" evidence="2">
    <location>
        <begin position="197"/>
        <end position="223"/>
    </location>
</feature>
<feature type="binding site" evidence="1">
    <location>
        <position position="26"/>
    </location>
    <ligand>
        <name>Ca(2+)</name>
        <dbReference type="ChEBI" id="CHEBI:29108"/>
    </ligand>
</feature>
<feature type="binding site" evidence="1">
    <location>
        <position position="31"/>
    </location>
    <ligand>
        <name>Ca(2+)</name>
        <dbReference type="ChEBI" id="CHEBI:29108"/>
    </ligand>
</feature>
<feature type="binding site" description="axial binding residue" evidence="1">
    <location>
        <position position="47"/>
    </location>
    <ligand>
        <name>Fe(II)-heme a</name>
        <dbReference type="ChEBI" id="CHEBI:61715"/>
        <note>low-spin</note>
    </ligand>
    <ligandPart>
        <name>Fe</name>
        <dbReference type="ChEBI" id="CHEBI:18248"/>
    </ligandPart>
</feature>
<feature type="sequence conflict" description="In Ref. 2; AAC95107." evidence="3" ref="2">
    <original>T</original>
    <variation>S</variation>
    <location>
        <position position="25"/>
    </location>
</feature>
<feature type="sequence conflict" description="In Ref. 2; AAC95107." evidence="3" ref="2">
    <original>S</original>
    <variation>T</variation>
    <location>
        <position position="32"/>
    </location>
</feature>
<feature type="sequence conflict" description="In Ref. 2; AAC95107." evidence="3" ref="2">
    <original>V</original>
    <variation>I</variation>
    <location>
        <position position="50"/>
    </location>
</feature>
<feature type="sequence conflict" description="In Ref. 2; AAC95107." evidence="3" ref="2">
    <original>A</original>
    <variation>S</variation>
    <location>
        <position position="100"/>
    </location>
</feature>
<feature type="sequence conflict" description="In Ref. 2; AAC95107." evidence="3" ref="2">
    <original>I</original>
    <variation>L</variation>
    <location>
        <position position="122"/>
    </location>
</feature>
<feature type="sequence conflict" description="In Ref. 2; AAC95107." evidence="3" ref="2">
    <original>M</original>
    <variation>L</variation>
    <location>
        <position position="155"/>
    </location>
</feature>
<feature type="sequence conflict" description="In Ref. 2; AAC95107." evidence="3" ref="2">
    <original>V</original>
    <variation>A</variation>
    <location>
        <position position="171"/>
    </location>
</feature>
<feature type="non-terminal residue">
    <location>
        <position position="1"/>
    </location>
</feature>
<feature type="non-terminal residue">
    <location>
        <position position="223"/>
    </location>
</feature>
<evidence type="ECO:0000250" key="1">
    <source>
        <dbReference type="UniProtKB" id="P00401"/>
    </source>
</evidence>
<evidence type="ECO:0000255" key="2"/>
<evidence type="ECO:0000305" key="3"/>
<comment type="function">
    <text evidence="1">Component of the cytochrome c oxidase, the last enzyme in the mitochondrial electron transport chain which drives oxidative phosphorylation. The respiratory chain contains 3 multisubunit complexes succinate dehydrogenase (complex II, CII), ubiquinol-cytochrome c oxidoreductase (cytochrome b-c1 complex, complex III, CIII) and cytochrome c oxidase (complex IV, CIV), that cooperate to transfer electrons derived from NADH and succinate to molecular oxygen, creating an electrochemical gradient over the inner membrane that drives transmembrane transport and the ATP synthase. Cytochrome c oxidase is the component of the respiratory chain that catalyzes the reduction of oxygen to water. Electrons originating from reduced cytochrome c in the intermembrane space (IMS) are transferred via the dinuclear copper A center (CU(A)) of subunit 2 and heme A of subunit 1 to the active site in subunit 1, a binuclear center (BNC) formed by heme A3 and copper B (CU(B)). The BNC reduces molecular oxygen to 2 water molecules using 4 electrons from cytochrome c in the IMS and 4 protons from the mitochondrial matrix.</text>
</comment>
<comment type="catalytic activity">
    <reaction evidence="1">
        <text>4 Fe(II)-[cytochrome c] + O2 + 8 H(+)(in) = 4 Fe(III)-[cytochrome c] + 2 H2O + 4 H(+)(out)</text>
        <dbReference type="Rhea" id="RHEA:11436"/>
        <dbReference type="Rhea" id="RHEA-COMP:10350"/>
        <dbReference type="Rhea" id="RHEA-COMP:14399"/>
        <dbReference type="ChEBI" id="CHEBI:15377"/>
        <dbReference type="ChEBI" id="CHEBI:15378"/>
        <dbReference type="ChEBI" id="CHEBI:15379"/>
        <dbReference type="ChEBI" id="CHEBI:29033"/>
        <dbReference type="ChEBI" id="CHEBI:29034"/>
        <dbReference type="EC" id="7.1.1.9"/>
    </reaction>
    <physiologicalReaction direction="left-to-right" evidence="1">
        <dbReference type="Rhea" id="RHEA:11437"/>
    </physiologicalReaction>
</comment>
<comment type="cofactor">
    <cofactor evidence="1">
        <name>heme</name>
        <dbReference type="ChEBI" id="CHEBI:30413"/>
    </cofactor>
    <text evidence="1">Binds 2 heme A groups non-covalently per subunit.</text>
</comment>
<comment type="cofactor">
    <cofactor evidence="1">
        <name>Cu cation</name>
        <dbReference type="ChEBI" id="CHEBI:23378"/>
    </cofactor>
    <text evidence="1">Binds a copper B center.</text>
</comment>
<comment type="pathway">
    <text evidence="1">Energy metabolism; oxidative phosphorylation.</text>
</comment>
<comment type="subunit">
    <text evidence="1">Component of the cytochrome c oxidase (complex IV, CIV), a multisubunit enzyme composed of a catalytic core of 3 subunits and several supernumerary subunits. The complex exists as a monomer or a dimer and forms supercomplexes (SCs) in the inner mitochondrial membrane with ubiquinol-cytochrome c oxidoreductase (cytochrome b-c1 complex, complex III, CIII).</text>
</comment>
<comment type="subcellular location">
    <subcellularLocation>
        <location evidence="1">Mitochondrion inner membrane</location>
        <topology evidence="1">Multi-pass membrane protein</topology>
    </subcellularLocation>
</comment>
<comment type="similarity">
    <text evidence="3">Belongs to the heme-copper respiratory oxidase family.</text>
</comment>
<gene>
    <name type="primary">COI</name>
</gene>
<accession>Q8WEW3</accession>
<accession>Q9ZYY9</accession>
<dbReference type="EC" id="7.1.1.9"/>
<dbReference type="EMBL" id="AF120630">
    <property type="protein sequence ID" value="AAL55480.1"/>
    <property type="molecule type" value="Genomic_DNA"/>
</dbReference>
<dbReference type="EMBL" id="AF000062">
    <property type="protein sequence ID" value="AAC95107.1"/>
    <property type="molecule type" value="Genomic_DNA"/>
</dbReference>
<dbReference type="SMR" id="Q8WEW3"/>
<dbReference type="UniPathway" id="UPA00705"/>
<dbReference type="GO" id="GO:0005743">
    <property type="term" value="C:mitochondrial inner membrane"/>
    <property type="evidence" value="ECO:0007669"/>
    <property type="project" value="UniProtKB-SubCell"/>
</dbReference>
<dbReference type="GO" id="GO:0004129">
    <property type="term" value="F:cytochrome-c oxidase activity"/>
    <property type="evidence" value="ECO:0007669"/>
    <property type="project" value="UniProtKB-EC"/>
</dbReference>
<dbReference type="GO" id="GO:0020037">
    <property type="term" value="F:heme binding"/>
    <property type="evidence" value="ECO:0007669"/>
    <property type="project" value="InterPro"/>
</dbReference>
<dbReference type="GO" id="GO:0046872">
    <property type="term" value="F:metal ion binding"/>
    <property type="evidence" value="ECO:0007669"/>
    <property type="project" value="UniProtKB-KW"/>
</dbReference>
<dbReference type="GO" id="GO:0015990">
    <property type="term" value="P:electron transport coupled proton transport"/>
    <property type="evidence" value="ECO:0007669"/>
    <property type="project" value="TreeGrafter"/>
</dbReference>
<dbReference type="GO" id="GO:0006123">
    <property type="term" value="P:mitochondrial electron transport, cytochrome c to oxygen"/>
    <property type="evidence" value="ECO:0007669"/>
    <property type="project" value="TreeGrafter"/>
</dbReference>
<dbReference type="Gene3D" id="1.20.210.10">
    <property type="entry name" value="Cytochrome c oxidase-like, subunit I domain"/>
    <property type="match status" value="1"/>
</dbReference>
<dbReference type="InterPro" id="IPR023616">
    <property type="entry name" value="Cyt_c_oxase-like_su1_dom"/>
</dbReference>
<dbReference type="InterPro" id="IPR036927">
    <property type="entry name" value="Cyt_c_oxase-like_su1_sf"/>
</dbReference>
<dbReference type="InterPro" id="IPR000883">
    <property type="entry name" value="Cyt_C_Oxase_1"/>
</dbReference>
<dbReference type="PANTHER" id="PTHR10422">
    <property type="entry name" value="CYTOCHROME C OXIDASE SUBUNIT 1"/>
    <property type="match status" value="1"/>
</dbReference>
<dbReference type="PANTHER" id="PTHR10422:SF18">
    <property type="entry name" value="CYTOCHROME C OXIDASE SUBUNIT 1"/>
    <property type="match status" value="1"/>
</dbReference>
<dbReference type="Pfam" id="PF00115">
    <property type="entry name" value="COX1"/>
    <property type="match status" value="1"/>
</dbReference>
<dbReference type="PRINTS" id="PR01165">
    <property type="entry name" value="CYCOXIDASEI"/>
</dbReference>
<dbReference type="SUPFAM" id="SSF81442">
    <property type="entry name" value="Cytochrome c oxidase subunit I-like"/>
    <property type="match status" value="1"/>
</dbReference>
<dbReference type="PROSITE" id="PS50855">
    <property type="entry name" value="COX1"/>
    <property type="match status" value="1"/>
</dbReference>
<organism>
    <name type="scientific">Sepia officinalis</name>
    <name type="common">Common cuttlefish</name>
    <dbReference type="NCBI Taxonomy" id="6610"/>
    <lineage>
        <taxon>Eukaryota</taxon>
        <taxon>Metazoa</taxon>
        <taxon>Spiralia</taxon>
        <taxon>Lophotrochozoa</taxon>
        <taxon>Mollusca</taxon>
        <taxon>Cephalopoda</taxon>
        <taxon>Coleoidea</taxon>
        <taxon>Decapodiformes</taxon>
        <taxon>Sepiida</taxon>
        <taxon>Sepiina</taxon>
        <taxon>Sepiidae</taxon>
        <taxon>Sepia</taxon>
    </lineage>
</organism>
<keyword id="KW-0106">Calcium</keyword>
<keyword id="KW-0186">Copper</keyword>
<keyword id="KW-0249">Electron transport</keyword>
<keyword id="KW-0349">Heme</keyword>
<keyword id="KW-0408">Iron</keyword>
<keyword id="KW-0472">Membrane</keyword>
<keyword id="KW-0479">Metal-binding</keyword>
<keyword id="KW-0496">Mitochondrion</keyword>
<keyword id="KW-0999">Mitochondrion inner membrane</keyword>
<keyword id="KW-0679">Respiratory chain</keyword>
<keyword id="KW-1278">Translocase</keyword>
<keyword id="KW-0812">Transmembrane</keyword>
<keyword id="KW-1133">Transmembrane helix</keyword>
<keyword id="KW-0813">Transport</keyword>
<proteinExistence type="inferred from homology"/>
<reference key="1">
    <citation type="submission" date="1999-01" db="EMBL/GenBank/DDBJ databases">
        <title>On bivalve phylogeny: a high-level phylogeny of the mollusk class Bivalvia based on a combined analysis of morphology and DNA sequence data.</title>
        <authorList>
            <person name="Giribet G."/>
            <person name="Wheeler W.C."/>
        </authorList>
    </citation>
    <scope>NUCLEOTIDE SEQUENCE [GENOMIC DNA]</scope>
</reference>
<reference key="2">
    <citation type="journal article" date="1999" name="Bull. Mar. Sci.">
        <title>Phylogenetic analysis of cytochrome c oxidase I sequences to determine higher-level relationships within the coleoid cephalopods.</title>
        <authorList>
            <person name="Carlini D.B."/>
            <person name="Graves J.E."/>
        </authorList>
    </citation>
    <scope>NUCLEOTIDE SEQUENCE [GENOMIC DNA] OF 3-221</scope>
</reference>
<sequence>IGTLYFIFGIWSGLLGTSLSLMIRTELGKPGSLLNDDQLYNVVVTAHGFVMIFFLVMPIMIGGFGNWLVPLMLGAPDMAFPRMNNMSFWLLPPSLTLLLASSAVESGAGTGWTVYPPLSSNISHAGPSVDLAIFSLHLAGVSSILGAINFITTIMNMRWEGLQMERLPLFVWSVFITAILLLLSLPVLAGAITMLLTDRNFNTTFFDPSGGGDPILYQHLFWF</sequence>
<geneLocation type="mitochondrion"/>
<protein>
    <recommendedName>
        <fullName>Cytochrome c oxidase subunit 1</fullName>
        <ecNumber>7.1.1.9</ecNumber>
    </recommendedName>
    <alternativeName>
        <fullName>Cytochrome c oxidase polypeptide I</fullName>
    </alternativeName>
</protein>